<keyword id="KW-0067">ATP-binding</keyword>
<keyword id="KW-0418">Kinase</keyword>
<keyword id="KW-0460">Magnesium</keyword>
<keyword id="KW-0479">Metal-binding</keyword>
<keyword id="KW-0547">Nucleotide-binding</keyword>
<keyword id="KW-0784">Thiamine biosynthesis</keyword>
<keyword id="KW-0808">Transferase</keyword>
<evidence type="ECO:0000255" key="1">
    <source>
        <dbReference type="HAMAP-Rule" id="MF_00228"/>
    </source>
</evidence>
<accession>B7IAM8</accession>
<name>THIM_ACIB5</name>
<gene>
    <name evidence="1" type="primary">thiM</name>
    <name type="ordered locus">AB57_2427</name>
</gene>
<organism>
    <name type="scientific">Acinetobacter baumannii (strain AB0057)</name>
    <dbReference type="NCBI Taxonomy" id="480119"/>
    <lineage>
        <taxon>Bacteria</taxon>
        <taxon>Pseudomonadati</taxon>
        <taxon>Pseudomonadota</taxon>
        <taxon>Gammaproteobacteria</taxon>
        <taxon>Moraxellales</taxon>
        <taxon>Moraxellaceae</taxon>
        <taxon>Acinetobacter</taxon>
        <taxon>Acinetobacter calcoaceticus/baumannii complex</taxon>
    </lineage>
</organism>
<comment type="function">
    <text evidence="1">Catalyzes the phosphorylation of the hydroxyl group of 4-methyl-5-beta-hydroxyethylthiazole (THZ).</text>
</comment>
<comment type="catalytic activity">
    <reaction evidence="1">
        <text>5-(2-hydroxyethyl)-4-methylthiazole + ATP = 4-methyl-5-(2-phosphooxyethyl)-thiazole + ADP + H(+)</text>
        <dbReference type="Rhea" id="RHEA:24212"/>
        <dbReference type="ChEBI" id="CHEBI:15378"/>
        <dbReference type="ChEBI" id="CHEBI:17957"/>
        <dbReference type="ChEBI" id="CHEBI:30616"/>
        <dbReference type="ChEBI" id="CHEBI:58296"/>
        <dbReference type="ChEBI" id="CHEBI:456216"/>
        <dbReference type="EC" id="2.7.1.50"/>
    </reaction>
</comment>
<comment type="cofactor">
    <cofactor evidence="1">
        <name>Mg(2+)</name>
        <dbReference type="ChEBI" id="CHEBI:18420"/>
    </cofactor>
</comment>
<comment type="pathway">
    <text evidence="1">Cofactor biosynthesis; thiamine diphosphate biosynthesis; 4-methyl-5-(2-phosphoethyl)-thiazole from 5-(2-hydroxyethyl)-4-methylthiazole: step 1/1.</text>
</comment>
<comment type="similarity">
    <text evidence="1">Belongs to the Thz kinase family.</text>
</comment>
<feature type="chain" id="PRO_0000383810" description="Hydroxyethylthiazole kinase">
    <location>
        <begin position="1"/>
        <end position="275"/>
    </location>
</feature>
<feature type="binding site" evidence="1">
    <location>
        <position position="50"/>
    </location>
    <ligand>
        <name>substrate</name>
    </ligand>
</feature>
<feature type="binding site" evidence="1">
    <location>
        <position position="126"/>
    </location>
    <ligand>
        <name>ATP</name>
        <dbReference type="ChEBI" id="CHEBI:30616"/>
    </ligand>
</feature>
<feature type="binding site" evidence="1">
    <location>
        <position position="171"/>
    </location>
    <ligand>
        <name>ATP</name>
        <dbReference type="ChEBI" id="CHEBI:30616"/>
    </ligand>
</feature>
<feature type="binding site" evidence="1">
    <location>
        <position position="200"/>
    </location>
    <ligand>
        <name>substrate</name>
    </ligand>
</feature>
<reference key="1">
    <citation type="journal article" date="2008" name="J. Bacteriol.">
        <title>Comparative genome sequence analysis of multidrug-resistant Acinetobacter baumannii.</title>
        <authorList>
            <person name="Adams M.D."/>
            <person name="Goglin K."/>
            <person name="Molyneaux N."/>
            <person name="Hujer K.M."/>
            <person name="Lavender H."/>
            <person name="Jamison J.J."/>
            <person name="MacDonald I.J."/>
            <person name="Martin K.M."/>
            <person name="Russo T."/>
            <person name="Campagnari A.A."/>
            <person name="Hujer A.M."/>
            <person name="Bonomo R.A."/>
            <person name="Gill S.R."/>
        </authorList>
    </citation>
    <scope>NUCLEOTIDE SEQUENCE [LARGE SCALE GENOMIC DNA]</scope>
    <source>
        <strain>AB0057</strain>
    </source>
</reference>
<dbReference type="EC" id="2.7.1.50" evidence="1"/>
<dbReference type="EMBL" id="CP001182">
    <property type="protein sequence ID" value="ACJ42540.1"/>
    <property type="molecule type" value="Genomic_DNA"/>
</dbReference>
<dbReference type="RefSeq" id="WP_001089458.1">
    <property type="nucleotide sequence ID" value="NC_011586.2"/>
</dbReference>
<dbReference type="SMR" id="B7IAM8"/>
<dbReference type="KEGG" id="abn:AB57_2427"/>
<dbReference type="HOGENOM" id="CLU_019943_0_1_6"/>
<dbReference type="UniPathway" id="UPA00060">
    <property type="reaction ID" value="UER00139"/>
</dbReference>
<dbReference type="Proteomes" id="UP000007094">
    <property type="component" value="Chromosome"/>
</dbReference>
<dbReference type="GO" id="GO:0005524">
    <property type="term" value="F:ATP binding"/>
    <property type="evidence" value="ECO:0007669"/>
    <property type="project" value="UniProtKB-UniRule"/>
</dbReference>
<dbReference type="GO" id="GO:0004417">
    <property type="term" value="F:hydroxyethylthiazole kinase activity"/>
    <property type="evidence" value="ECO:0007669"/>
    <property type="project" value="UniProtKB-UniRule"/>
</dbReference>
<dbReference type="GO" id="GO:0000287">
    <property type="term" value="F:magnesium ion binding"/>
    <property type="evidence" value="ECO:0007669"/>
    <property type="project" value="UniProtKB-UniRule"/>
</dbReference>
<dbReference type="GO" id="GO:0009228">
    <property type="term" value="P:thiamine biosynthetic process"/>
    <property type="evidence" value="ECO:0007669"/>
    <property type="project" value="UniProtKB-KW"/>
</dbReference>
<dbReference type="GO" id="GO:0009229">
    <property type="term" value="P:thiamine diphosphate biosynthetic process"/>
    <property type="evidence" value="ECO:0007669"/>
    <property type="project" value="UniProtKB-UniRule"/>
</dbReference>
<dbReference type="CDD" id="cd01170">
    <property type="entry name" value="THZ_kinase"/>
    <property type="match status" value="1"/>
</dbReference>
<dbReference type="Gene3D" id="3.40.1190.20">
    <property type="match status" value="1"/>
</dbReference>
<dbReference type="HAMAP" id="MF_00228">
    <property type="entry name" value="Thz_kinase"/>
    <property type="match status" value="1"/>
</dbReference>
<dbReference type="InterPro" id="IPR000417">
    <property type="entry name" value="Hyethyz_kinase"/>
</dbReference>
<dbReference type="InterPro" id="IPR029056">
    <property type="entry name" value="Ribokinase-like"/>
</dbReference>
<dbReference type="NCBIfam" id="NF006830">
    <property type="entry name" value="PRK09355.1"/>
    <property type="match status" value="1"/>
</dbReference>
<dbReference type="Pfam" id="PF02110">
    <property type="entry name" value="HK"/>
    <property type="match status" value="1"/>
</dbReference>
<dbReference type="PIRSF" id="PIRSF000513">
    <property type="entry name" value="Thz_kinase"/>
    <property type="match status" value="1"/>
</dbReference>
<dbReference type="PRINTS" id="PR01099">
    <property type="entry name" value="HYETHTZKNASE"/>
</dbReference>
<dbReference type="SUPFAM" id="SSF53613">
    <property type="entry name" value="Ribokinase-like"/>
    <property type="match status" value="1"/>
</dbReference>
<sequence length="275" mass="29148">MNSTSNLIEQVIEAWQNMQAKTPLVQCITNSVAANYTANVLLASGASPAMIDNPYEAESFTKISSALSINLGTPTSEQMQAMQISAKTAQLNNVPWVLDPVGYGPILAWRSQMTDELLQFKPSVIRGNASEISTLAGNQVQSKGVDSTLSSDQAYQQAFSLLTHASCIAISGESDYILSNEVDAVIQVNGGSPLQPKITATGCALGALIAAYSAVTTPTIAALSAHIHFAIAGKLAANQAQTMGSFSSIFMDYIHMLDANLIEQYADVKLLNKQA</sequence>
<proteinExistence type="inferred from homology"/>
<protein>
    <recommendedName>
        <fullName evidence="1">Hydroxyethylthiazole kinase</fullName>
        <ecNumber evidence="1">2.7.1.50</ecNumber>
    </recommendedName>
    <alternativeName>
        <fullName evidence="1">4-methyl-5-beta-hydroxyethylthiazole kinase</fullName>
        <shortName evidence="1">TH kinase</shortName>
        <shortName evidence="1">Thz kinase</shortName>
    </alternativeName>
</protein>